<comment type="function">
    <text evidence="2 3">RNA reader protein, which recognizes and binds specific RNAs, thereby regulating RNA metabolic processes, such as pre-mRNA splicing, circular RNA (circRNA) formation, mRNA export, mRNA stability and/or translation. Involved in various cellular processes, such as mRNA storage into stress granules, apoptosis, lipid deposition, interferon response, glial cell fate and development. Binds to the 5'-NACUAAY-N(1,20)-UAAY-3' RNA core sequence. Acts as a mRNA modification reader that specifically recognizes and binds mRNA transcripts modified by internal N(7)-methylguanine (m7G). Promotes the formation of circular RNAs (circRNAs) during the epithelial to mesenchymal transition and in cardiomyocytes: acts by binding to sites flanking circRNA-forming exons. CircRNAs are produced by back-splicing circularization of pre-mRNAs. Plays a central role in myelinization via 3 distinct mechanisms (By similarity). First, acts by protecting and promoting stability of target mRNAs such as MBP, SIRT2 and CDKN1B, which promotes oligodendrocyte differentiation. Second, participates in mRNA transport by regulating the nuclear export of MBP mRNA. Finally, indirectly regulates mRNA splicing of MAG pre-mRNA during oligodendrocyte differentiation by acting as a negative regulator of MAG exon 12 alternative splicing: acts by binding to HNRNPA1 mRNA splicing factor, preventing its translation. Involved in microglia differentiation and remyelination by regulating microexon alternative splicing of the Rho GTPase pathway (By similarity). Involved in macrophage differentiation: promotes monocyte differentiation by regulating pre-mRNA splicing in naive peripheral blood monocytes (By similarity). Acts as an important regulator of muscle development: required for the contractile function of cardiomyocytes by regulating alternative splicing of cardiomyocyte transcripts. Acts as a negative regulator of thermogenesis by decreasing stability, nuclear export and translation of mRNAs encoding PPARGC1A and UCP1. Also required for visceral endoderm function and blood vessel development (By similarity). May also play a role in smooth muscle development (By similarity). In addition to its RNA-binding activity, also acts as a nuclear transcription coactivator for SREBF2/SREBP2 (By similarity).</text>
</comment>
<comment type="subunit">
    <text evidence="2 3">Homodimer; does not require RNA to homodimerize (By similarity). Able to heterodimerize with BICC1 (By similarity).</text>
</comment>
<comment type="subcellular location">
    <subcellularLocation>
        <location evidence="2">Nucleus</location>
    </subcellularLocation>
    <subcellularLocation>
        <location evidence="2">Cytoplasm</location>
    </subcellularLocation>
</comment>
<comment type="domain">
    <text evidence="2">The KH domain and the Qua2 region are involved in RNA binding.</text>
</comment>
<comment type="PTM">
    <text evidence="3">Methylated by PRMT1.</text>
</comment>
<comment type="PTM">
    <text evidence="3">Tyrosine phosphorylated at its C-terminus, probably by FYN. Phosphorylation leads to decreased mRNA-binding affinity, affecting transport and/or stabilization of MBP mRNA (By similarity).</text>
</comment>
<comment type="PTM">
    <text evidence="3">Ubiquitinated by RNF6 in macrophages, leading to its degradation.</text>
</comment>
<comment type="similarity">
    <text evidence="4">Belongs to the quaking family.</text>
</comment>
<organism>
    <name type="scientific">Felis catus</name>
    <name type="common">Cat</name>
    <name type="synonym">Felis silvestris catus</name>
    <dbReference type="NCBI Taxonomy" id="9685"/>
    <lineage>
        <taxon>Eukaryota</taxon>
        <taxon>Metazoa</taxon>
        <taxon>Chordata</taxon>
        <taxon>Craniata</taxon>
        <taxon>Vertebrata</taxon>
        <taxon>Euteleostomi</taxon>
        <taxon>Mammalia</taxon>
        <taxon>Eutheria</taxon>
        <taxon>Laurasiatheria</taxon>
        <taxon>Carnivora</taxon>
        <taxon>Feliformia</taxon>
        <taxon>Felidae</taxon>
        <taxon>Felinae</taxon>
        <taxon>Felis</taxon>
    </lineage>
</organism>
<name>QKI_FELCA</name>
<keyword id="KW-0963">Cytoplasm</keyword>
<keyword id="KW-0217">Developmental protein</keyword>
<keyword id="KW-0221">Differentiation</keyword>
<keyword id="KW-0238">DNA-binding</keyword>
<keyword id="KW-0488">Methylation</keyword>
<keyword id="KW-0507">mRNA processing</keyword>
<keyword id="KW-0508">mRNA splicing</keyword>
<keyword id="KW-0509">mRNA transport</keyword>
<keyword id="KW-0539">Nucleus</keyword>
<keyword id="KW-0597">Phosphoprotein</keyword>
<keyword id="KW-1185">Reference proteome</keyword>
<keyword id="KW-0694">RNA-binding</keyword>
<keyword id="KW-0729">SH3-binding</keyword>
<keyword id="KW-0810">Translation regulation</keyword>
<keyword id="KW-0813">Transport</keyword>
<keyword id="KW-0832">Ubl conjugation</keyword>
<protein>
    <recommendedName>
        <fullName evidence="3">KH domain-containing RNA-binding protein QKI</fullName>
    </recommendedName>
    <alternativeName>
        <fullName evidence="3">Protein quaking</fullName>
        <shortName evidence="4">FqkI</shortName>
    </alternativeName>
</protein>
<gene>
    <name evidence="3" type="primary">QKI</name>
</gene>
<proteinExistence type="evidence at transcript level"/>
<evidence type="ECO:0000250" key="1">
    <source>
        <dbReference type="UniProtKB" id="Q17339"/>
    </source>
</evidence>
<evidence type="ECO:0000250" key="2">
    <source>
        <dbReference type="UniProtKB" id="Q96PU8"/>
    </source>
</evidence>
<evidence type="ECO:0000250" key="3">
    <source>
        <dbReference type="UniProtKB" id="Q9QYS9"/>
    </source>
</evidence>
<evidence type="ECO:0000305" key="4"/>
<dbReference type="EMBL" id="AB061272">
    <property type="protein sequence ID" value="BAB47360.1"/>
    <property type="molecule type" value="mRNA"/>
</dbReference>
<dbReference type="RefSeq" id="NP_001009232.1">
    <property type="nucleotide sequence ID" value="NM_001009232.1"/>
</dbReference>
<dbReference type="SMR" id="Q7JJZ8"/>
<dbReference type="FunCoup" id="Q7JJZ8">
    <property type="interactions" value="46"/>
</dbReference>
<dbReference type="STRING" id="9685.ENSFCAP00000037791"/>
<dbReference type="PaxDb" id="9685-ENSFCAP00000015539"/>
<dbReference type="GeneID" id="493723"/>
<dbReference type="KEGG" id="fca:493723"/>
<dbReference type="CTD" id="9444"/>
<dbReference type="eggNOG" id="KOG1588">
    <property type="taxonomic scope" value="Eukaryota"/>
</dbReference>
<dbReference type="InParanoid" id="Q7JJZ8"/>
<dbReference type="OrthoDB" id="6777263at2759"/>
<dbReference type="Proteomes" id="UP000011712">
    <property type="component" value="Unplaced"/>
</dbReference>
<dbReference type="GO" id="GO:0005737">
    <property type="term" value="C:cytoplasm"/>
    <property type="evidence" value="ECO:0007669"/>
    <property type="project" value="UniProtKB-SubCell"/>
</dbReference>
<dbReference type="GO" id="GO:0005634">
    <property type="term" value="C:nucleus"/>
    <property type="evidence" value="ECO:0000318"/>
    <property type="project" value="GO_Central"/>
</dbReference>
<dbReference type="GO" id="GO:0003677">
    <property type="term" value="F:DNA binding"/>
    <property type="evidence" value="ECO:0007669"/>
    <property type="project" value="UniProtKB-KW"/>
</dbReference>
<dbReference type="GO" id="GO:0035198">
    <property type="term" value="F:miRNA binding"/>
    <property type="evidence" value="ECO:0000250"/>
    <property type="project" value="UniProtKB"/>
</dbReference>
<dbReference type="GO" id="GO:0003729">
    <property type="term" value="F:mRNA binding"/>
    <property type="evidence" value="ECO:0000318"/>
    <property type="project" value="GO_Central"/>
</dbReference>
<dbReference type="GO" id="GO:0017124">
    <property type="term" value="F:SH3 domain binding"/>
    <property type="evidence" value="ECO:0007669"/>
    <property type="project" value="UniProtKB-KW"/>
</dbReference>
<dbReference type="GO" id="GO:0014004">
    <property type="term" value="P:microglia differentiation"/>
    <property type="evidence" value="ECO:0000250"/>
    <property type="project" value="UniProtKB"/>
</dbReference>
<dbReference type="GO" id="GO:0051028">
    <property type="term" value="P:mRNA transport"/>
    <property type="evidence" value="ECO:0007669"/>
    <property type="project" value="UniProtKB-KW"/>
</dbReference>
<dbReference type="GO" id="GO:1905869">
    <property type="term" value="P:negative regulation of 3'-UTR-mediated mRNA stabilization"/>
    <property type="evidence" value="ECO:0000250"/>
    <property type="project" value="UniProtKB"/>
</dbReference>
<dbReference type="GO" id="GO:0120163">
    <property type="term" value="P:negative regulation of cold-induced thermogenesis"/>
    <property type="evidence" value="ECO:0000250"/>
    <property type="project" value="UniProtKB"/>
</dbReference>
<dbReference type="GO" id="GO:0045650">
    <property type="term" value="P:negative regulation of macrophage differentiation"/>
    <property type="evidence" value="ECO:0000250"/>
    <property type="project" value="UniProtKB"/>
</dbReference>
<dbReference type="GO" id="GO:2000626">
    <property type="term" value="P:negative regulation of miRNA catabolic process"/>
    <property type="evidence" value="ECO:0000250"/>
    <property type="project" value="UniProtKB"/>
</dbReference>
<dbReference type="GO" id="GO:0017148">
    <property type="term" value="P:negative regulation of translation"/>
    <property type="evidence" value="ECO:0000250"/>
    <property type="project" value="UniProtKB"/>
</dbReference>
<dbReference type="GO" id="GO:0048710">
    <property type="term" value="P:regulation of astrocyte differentiation"/>
    <property type="evidence" value="ECO:0000250"/>
    <property type="project" value="UniProtKB"/>
</dbReference>
<dbReference type="GO" id="GO:0010717">
    <property type="term" value="P:regulation of epithelial to mesenchymal transition"/>
    <property type="evidence" value="ECO:0000250"/>
    <property type="project" value="UniProtKB"/>
</dbReference>
<dbReference type="GO" id="GO:0048024">
    <property type="term" value="P:regulation of mRNA splicing, via spliceosome"/>
    <property type="evidence" value="ECO:0000250"/>
    <property type="project" value="UniProtKB"/>
</dbReference>
<dbReference type="GO" id="GO:0160091">
    <property type="term" value="P:spliceosome-depend formation of circular RNA"/>
    <property type="evidence" value="ECO:0000250"/>
    <property type="project" value="UniProtKB"/>
</dbReference>
<dbReference type="GO" id="GO:0035886">
    <property type="term" value="P:vascular associated smooth muscle cell differentiation"/>
    <property type="evidence" value="ECO:0000250"/>
    <property type="project" value="UniProtKB"/>
</dbReference>
<dbReference type="CDD" id="cd22465">
    <property type="entry name" value="KH-I_Hqk"/>
    <property type="match status" value="1"/>
</dbReference>
<dbReference type="FunFam" id="1.20.5.4010:FF:000001">
    <property type="entry name" value="protein quaking isoform X1"/>
    <property type="match status" value="1"/>
</dbReference>
<dbReference type="FunFam" id="3.30.1370.10:FF:000055">
    <property type="entry name" value="protein quaking isoform X1"/>
    <property type="match status" value="1"/>
</dbReference>
<dbReference type="Gene3D" id="1.20.5.4010">
    <property type="match status" value="1"/>
</dbReference>
<dbReference type="Gene3D" id="3.30.1370.10">
    <property type="entry name" value="K Homology domain, type 1"/>
    <property type="match status" value="1"/>
</dbReference>
<dbReference type="InterPro" id="IPR045071">
    <property type="entry name" value="BBP-like"/>
</dbReference>
<dbReference type="InterPro" id="IPR055256">
    <property type="entry name" value="KH_1_KHDC4/BBP-like"/>
</dbReference>
<dbReference type="InterPro" id="IPR004087">
    <property type="entry name" value="KH_dom"/>
</dbReference>
<dbReference type="InterPro" id="IPR036612">
    <property type="entry name" value="KH_dom_type_1_sf"/>
</dbReference>
<dbReference type="InterPro" id="IPR032367">
    <property type="entry name" value="Quaking_NLS"/>
</dbReference>
<dbReference type="InterPro" id="IPR032377">
    <property type="entry name" value="STAR_dimer"/>
</dbReference>
<dbReference type="PANTHER" id="PTHR11208:SF125">
    <property type="entry name" value="KH DOMAIN-CONTAINING RNA-BINDING PROTEIN QKI"/>
    <property type="match status" value="1"/>
</dbReference>
<dbReference type="PANTHER" id="PTHR11208">
    <property type="entry name" value="RNA-BINDING PROTEIN RELATED"/>
    <property type="match status" value="1"/>
</dbReference>
<dbReference type="Pfam" id="PF22675">
    <property type="entry name" value="KH-I_KHDC4-BBP"/>
    <property type="match status" value="1"/>
</dbReference>
<dbReference type="Pfam" id="PF16551">
    <property type="entry name" value="Quaking_NLS"/>
    <property type="match status" value="1"/>
</dbReference>
<dbReference type="Pfam" id="PF16544">
    <property type="entry name" value="STAR_dimer"/>
    <property type="match status" value="1"/>
</dbReference>
<dbReference type="SMART" id="SM00322">
    <property type="entry name" value="KH"/>
    <property type="match status" value="1"/>
</dbReference>
<dbReference type="SUPFAM" id="SSF54791">
    <property type="entry name" value="Eukaryotic type KH-domain (KH-domain type I)"/>
    <property type="match status" value="1"/>
</dbReference>
<reference key="1">
    <citation type="journal article" date="2002" name="J. Jpn. Vet. Med. Assoc.">
        <title>Nucleotide sequence of cDNA encoding for canine and feline quaking protein.</title>
        <authorList>
            <person name="Murata T."/>
            <person name="Yamashiro Y."/>
            <person name="Kondo T."/>
            <person name="Une S."/>
            <person name="Nakaichi M."/>
        </authorList>
    </citation>
    <scope>NUCLEOTIDE SEQUENCE [MRNA]</scope>
    <source>
        <tissue>Blood</tissue>
    </source>
</reference>
<sequence>MVGEMETKEKPKPTPDYLMQLMNDKKLMSSLPNFCGIFNHLERLLDEEISRVRKDMYNDTLNGSTEKRSAELPDAVGPIVQLQEKLYVPVKEYPDFNFVGRILGPRGLTAKQLEAETGCKIMVRGKGSMRDKKKEEQNRGKPNWEHLNEDLHVLITVEDAQNRAEIKLKRAVEEVKKLLVPAAEGEDSLKKMQLMELAILNGTYRDANIKSPALAFSLAATAQAAPRIITGPAPVLPPAALRTPTPAGPTIMPLIRQIQTAVMPNGTPHPTAAIVPPGPEAGLIYTPYEYPYTLAPATSILEYPIEPSGVLGAVATKVRRHDMRVHPYQRIVTADRAATGN</sequence>
<feature type="chain" id="PRO_0000239371" description="KH domain-containing RNA-binding protein QKI">
    <location>
        <begin position="1"/>
        <end position="341"/>
    </location>
</feature>
<feature type="domain" description="KH">
    <location>
        <begin position="87"/>
        <end position="153"/>
    </location>
</feature>
<feature type="region of interest" description="Qua1 domain; involved in homodimerization" evidence="1">
    <location>
        <begin position="11"/>
        <end position="82"/>
    </location>
</feature>
<feature type="region of interest" description="Qua2 domain; involved in RNA binding" evidence="2">
    <location>
        <begin position="182"/>
        <end position="213"/>
    </location>
</feature>
<feature type="short sequence motif" description="SH3-binding">
    <location>
        <begin position="276"/>
        <end position="279"/>
    </location>
</feature>
<feature type="short sequence motif" description="Nuclear localization signal" evidence="3">
    <location>
        <begin position="324"/>
        <end position="330"/>
    </location>
</feature>
<feature type="site" description="Involved in RNA binding" evidence="2">
    <location>
        <position position="97"/>
    </location>
</feature>
<feature type="site" description="Involved in RNA binding" evidence="2">
    <location>
        <position position="120"/>
    </location>
</feature>
<feature type="site" description="Involved in RNA binding" evidence="2">
    <location>
        <position position="124"/>
    </location>
</feature>
<feature type="site" description="Involved in RNA binding" evidence="2">
    <location>
        <position position="130"/>
    </location>
</feature>
<feature type="site" description="Involved in RNA binding" evidence="2">
    <location>
        <position position="190"/>
    </location>
</feature>
<feature type="site" description="Involved in RNA binding" evidence="2">
    <location>
        <position position="193"/>
    </location>
</feature>
<feature type="modified residue" description="Phosphoserine" evidence="2">
    <location>
        <position position="188"/>
    </location>
</feature>
<feature type="modified residue" description="Omega-N-methylarginine" evidence="2">
    <location>
        <position position="227"/>
    </location>
</feature>
<feature type="modified residue" description="Asymmetric dimethylarginine; by CARM1; alternate" evidence="2">
    <location>
        <position position="242"/>
    </location>
</feature>
<feature type="modified residue" description="Omega-N-methylarginine; alternate" evidence="2">
    <location>
        <position position="242"/>
    </location>
</feature>
<feature type="modified residue" description="Omega-N-methylarginine" evidence="3">
    <location>
        <position position="256"/>
    </location>
</feature>
<accession>Q7JJZ8</accession>